<reference key="1">
    <citation type="journal article" date="2000" name="Nature">
        <title>Sequence and analysis of chromosome 1 of the plant Arabidopsis thaliana.</title>
        <authorList>
            <person name="Theologis A."/>
            <person name="Ecker J.R."/>
            <person name="Palm C.J."/>
            <person name="Federspiel N.A."/>
            <person name="Kaul S."/>
            <person name="White O."/>
            <person name="Alonso J."/>
            <person name="Altafi H."/>
            <person name="Araujo R."/>
            <person name="Bowman C.L."/>
            <person name="Brooks S.Y."/>
            <person name="Buehler E."/>
            <person name="Chan A."/>
            <person name="Chao Q."/>
            <person name="Chen H."/>
            <person name="Cheuk R.F."/>
            <person name="Chin C.W."/>
            <person name="Chung M.K."/>
            <person name="Conn L."/>
            <person name="Conway A.B."/>
            <person name="Conway A.R."/>
            <person name="Creasy T.H."/>
            <person name="Dewar K."/>
            <person name="Dunn P."/>
            <person name="Etgu P."/>
            <person name="Feldblyum T.V."/>
            <person name="Feng J.-D."/>
            <person name="Fong B."/>
            <person name="Fujii C.Y."/>
            <person name="Gill J.E."/>
            <person name="Goldsmith A.D."/>
            <person name="Haas B."/>
            <person name="Hansen N.F."/>
            <person name="Hughes B."/>
            <person name="Huizar L."/>
            <person name="Hunter J.L."/>
            <person name="Jenkins J."/>
            <person name="Johnson-Hopson C."/>
            <person name="Khan S."/>
            <person name="Khaykin E."/>
            <person name="Kim C.J."/>
            <person name="Koo H.L."/>
            <person name="Kremenetskaia I."/>
            <person name="Kurtz D.B."/>
            <person name="Kwan A."/>
            <person name="Lam B."/>
            <person name="Langin-Hooper S."/>
            <person name="Lee A."/>
            <person name="Lee J.M."/>
            <person name="Lenz C.A."/>
            <person name="Li J.H."/>
            <person name="Li Y.-P."/>
            <person name="Lin X."/>
            <person name="Liu S.X."/>
            <person name="Liu Z.A."/>
            <person name="Luros J.S."/>
            <person name="Maiti R."/>
            <person name="Marziali A."/>
            <person name="Militscher J."/>
            <person name="Miranda M."/>
            <person name="Nguyen M."/>
            <person name="Nierman W.C."/>
            <person name="Osborne B.I."/>
            <person name="Pai G."/>
            <person name="Peterson J."/>
            <person name="Pham P.K."/>
            <person name="Rizzo M."/>
            <person name="Rooney T."/>
            <person name="Rowley D."/>
            <person name="Sakano H."/>
            <person name="Salzberg S.L."/>
            <person name="Schwartz J.R."/>
            <person name="Shinn P."/>
            <person name="Southwick A.M."/>
            <person name="Sun H."/>
            <person name="Tallon L.J."/>
            <person name="Tambunga G."/>
            <person name="Toriumi M.J."/>
            <person name="Town C.D."/>
            <person name="Utterback T."/>
            <person name="Van Aken S."/>
            <person name="Vaysberg M."/>
            <person name="Vysotskaia V.S."/>
            <person name="Walker M."/>
            <person name="Wu D."/>
            <person name="Yu G."/>
            <person name="Fraser C.M."/>
            <person name="Venter J.C."/>
            <person name="Davis R.W."/>
        </authorList>
    </citation>
    <scope>NUCLEOTIDE SEQUENCE [LARGE SCALE GENOMIC DNA]</scope>
    <source>
        <strain>cv. Columbia</strain>
    </source>
</reference>
<reference key="2">
    <citation type="journal article" date="2017" name="Plant J.">
        <title>Araport11: a complete reannotation of the Arabidopsis thaliana reference genome.</title>
        <authorList>
            <person name="Cheng C.Y."/>
            <person name="Krishnakumar V."/>
            <person name="Chan A.P."/>
            <person name="Thibaud-Nissen F."/>
            <person name="Schobel S."/>
            <person name="Town C.D."/>
        </authorList>
    </citation>
    <scope>GENOME REANNOTATION</scope>
    <source>
        <strain>cv. Columbia</strain>
    </source>
</reference>
<reference key="3">
    <citation type="journal article" date="2001" name="Plant Physiol.">
        <title>A large family of genes that share homology with CLAVATA3.</title>
        <authorList>
            <person name="Cock J.M."/>
            <person name="McCormick S."/>
        </authorList>
    </citation>
    <scope>GENE FAMILY</scope>
    <scope>NOMENCLATURE</scope>
</reference>
<reference key="4">
    <citation type="journal article" date="2003" name="Plant Mol. Biol.">
        <title>The Arabidopsis CLV3-like (CLE) genes are expressed in diverse tissues and encode secreted proteins.</title>
        <authorList>
            <person name="Sharma V.K."/>
            <person name="Ramirez J."/>
            <person name="Fletcher J.C."/>
        </authorList>
    </citation>
    <scope>TISSUE SPECIFICITY</scope>
</reference>
<reference key="5">
    <citation type="journal article" date="2006" name="Plant Physiol.">
        <title>Evidence for functional conservation, sufficiency, and proteolytic processing of the CLAVATA3 CLE domain.</title>
        <authorList>
            <person name="Ni J."/>
            <person name="Clark S.E."/>
        </authorList>
    </citation>
    <scope>FUNCTION</scope>
    <scope>PROTEOLYTIC PROCESSING OF CLE1P</scope>
    <scope>MUTAGENESIS OF ARG-63</scope>
</reference>
<reference key="6">
    <citation type="journal article" date="2006" name="Plant Physiol.">
        <title>Gain-of-function phenotypes of many CLAVATA3/ESR genes, including four new family members, correlate with tandem variations in the conserved CLAVATA3/ESR domain.</title>
        <authorList>
            <person name="Strabala T.J."/>
            <person name="O'donnell P.J."/>
            <person name="Smit A.-M."/>
            <person name="Ampomah-Dwamena C."/>
            <person name="Martin E.J."/>
            <person name="Netzler N."/>
            <person name="Nieuwenhuizen N.J."/>
            <person name="Quinn B.D."/>
            <person name="Foote H.C.C."/>
            <person name="Hudson K.R."/>
        </authorList>
    </citation>
    <scope>GENE FAMILY</scope>
</reference>
<reference key="7">
    <citation type="journal article" date="2008" name="Cell. Mol. Life Sci.">
        <title>The CLE family of plant polypeptide signaling molecules.</title>
        <authorList>
            <person name="Jun J.H."/>
            <person name="Fiume E."/>
            <person name="Fletcher J.C."/>
        </authorList>
    </citation>
    <scope>REVIEW</scope>
</reference>
<reference key="8">
    <citation type="journal article" date="2008" name="Curr. Opin. Plant Biol.">
        <title>Diverse and conserved roles of CLE peptides.</title>
        <authorList>
            <person name="Mitchum M.G."/>
            <person name="Wang X."/>
            <person name="Davis E.L."/>
        </authorList>
    </citation>
    <scope>REVIEW</scope>
</reference>
<reference key="9">
    <citation type="journal article" date="2010" name="Protoplasma">
        <title>CLE peptide signaling during plant development.</title>
        <authorList>
            <person name="Wang G."/>
            <person name="Fiers M."/>
        </authorList>
    </citation>
    <scope>REVIEW</scope>
</reference>
<comment type="function">
    <molecule>CLE1p</molecule>
    <text evidence="5">Extracellular signal peptide that regulates cell fate.</text>
</comment>
<comment type="subcellular location">
    <molecule>CLE1p</molecule>
    <subcellularLocation>
        <location evidence="1">Secreted</location>
        <location evidence="1">Extracellular space</location>
    </subcellularLocation>
</comment>
<comment type="tissue specificity">
    <molecule>CLE1p</molecule>
    <text evidence="4">Mostly expressed in roots and seedlings, and, to a lower extent, in stems and apex.</text>
</comment>
<comment type="PTM">
    <molecule>CLE1p</molecule>
    <text evidence="1">The O-glycosylation (arabinosylation) of the hydroxyproline Pro-69 enhances binding affinity of the CLE1p peptide for its receptor.</text>
</comment>
<comment type="similarity">
    <text evidence="7">Belongs to the CLV3/ESR signal peptide family.</text>
</comment>
<evidence type="ECO:0000250" key="1">
    <source>
        <dbReference type="UniProtKB" id="O49519"/>
    </source>
</evidence>
<evidence type="ECO:0000255" key="2"/>
<evidence type="ECO:0000255" key="3">
    <source>
        <dbReference type="PROSITE-ProRule" id="PRU00498"/>
    </source>
</evidence>
<evidence type="ECO:0000269" key="4">
    <source>
    </source>
</evidence>
<evidence type="ECO:0000269" key="5">
    <source>
    </source>
</evidence>
<evidence type="ECO:0000303" key="6">
    <source>
    </source>
</evidence>
<evidence type="ECO:0000305" key="7"/>
<evidence type="ECO:0000312" key="8">
    <source>
        <dbReference type="Araport" id="AT1G73165"/>
    </source>
</evidence>
<evidence type="ECO:0000312" key="9">
    <source>
        <dbReference type="EMBL" id="AC008017"/>
    </source>
</evidence>
<accession>Q3ECD6</accession>
<gene>
    <name evidence="6" type="primary">CLE1</name>
    <name evidence="8" type="ordered locus">At1g73165</name>
    <name evidence="9" type="ORF">F3N23</name>
</gene>
<keyword id="KW-0217">Developmental protein</keyword>
<keyword id="KW-0221">Differentiation</keyword>
<keyword id="KW-0325">Glycoprotein</keyword>
<keyword id="KW-0379">Hydroxylation</keyword>
<keyword id="KW-1185">Reference proteome</keyword>
<keyword id="KW-0964">Secreted</keyword>
<keyword id="KW-0732">Signal</keyword>
<sequence length="74" mass="8338">MANLKFLLCLFLICVSLSRSSASRPMFPNADGIKRGRMMIEAEEVLKASMEKLMERGFNESMRLSPGGPDPRHH</sequence>
<feature type="signal peptide" evidence="2">
    <location>
        <begin position="1"/>
        <end position="22"/>
    </location>
</feature>
<feature type="chain" id="PRO_0000401233" description="CLAVATA3/ESR (CLE)-related protein 1">
    <location>
        <begin position="23"/>
        <end position="74"/>
    </location>
</feature>
<feature type="peptide" id="PRO_0000401234" description="CLE1p" evidence="5">
    <location>
        <begin position="63"/>
        <end position="74"/>
    </location>
</feature>
<feature type="modified residue" description="Hydroxyproline" evidence="1">
    <location>
        <position position="66"/>
    </location>
</feature>
<feature type="modified residue" description="Hydroxyproline" evidence="1">
    <location>
        <position position="69"/>
    </location>
</feature>
<feature type="glycosylation site" description="N-linked (GlcNAc...) asparagine" evidence="3">
    <location>
        <position position="59"/>
    </location>
</feature>
<feature type="glycosylation site" description="O-linked (Ara...) hydroxyproline" evidence="1">
    <location>
        <position position="69"/>
    </location>
</feature>
<feature type="mutagenesis site" description="No impact on proteolysis." evidence="5">
    <original>R</original>
    <variation>K</variation>
    <variation>N</variation>
    <location>
        <position position="63"/>
    </location>
</feature>
<protein>
    <recommendedName>
        <fullName evidence="6">CLAVATA3/ESR (CLE)-related protein 1</fullName>
    </recommendedName>
    <component>
        <recommendedName>
            <fullName evidence="6">CLE1p</fullName>
        </recommendedName>
    </component>
</protein>
<organism>
    <name type="scientific">Arabidopsis thaliana</name>
    <name type="common">Mouse-ear cress</name>
    <dbReference type="NCBI Taxonomy" id="3702"/>
    <lineage>
        <taxon>Eukaryota</taxon>
        <taxon>Viridiplantae</taxon>
        <taxon>Streptophyta</taxon>
        <taxon>Embryophyta</taxon>
        <taxon>Tracheophyta</taxon>
        <taxon>Spermatophyta</taxon>
        <taxon>Magnoliopsida</taxon>
        <taxon>eudicotyledons</taxon>
        <taxon>Gunneridae</taxon>
        <taxon>Pentapetalae</taxon>
        <taxon>rosids</taxon>
        <taxon>malvids</taxon>
        <taxon>Brassicales</taxon>
        <taxon>Brassicaceae</taxon>
        <taxon>Camelineae</taxon>
        <taxon>Arabidopsis</taxon>
    </lineage>
</organism>
<dbReference type="EMBL" id="AC008017">
    <property type="status" value="NOT_ANNOTATED_CDS"/>
    <property type="molecule type" value="Genomic_DNA"/>
</dbReference>
<dbReference type="EMBL" id="CP002684">
    <property type="protein sequence ID" value="AEE35421.1"/>
    <property type="molecule type" value="Genomic_DNA"/>
</dbReference>
<dbReference type="RefSeq" id="NP_001319370.1">
    <property type="nucleotide sequence ID" value="NM_001334570.1"/>
</dbReference>
<dbReference type="STRING" id="3702.Q3ECD6"/>
<dbReference type="GlyCosmos" id="Q3ECD6">
    <property type="glycosylation" value="2 sites, No reported glycans"/>
</dbReference>
<dbReference type="GlyGen" id="Q3ECD6">
    <property type="glycosylation" value="1 site"/>
</dbReference>
<dbReference type="PaxDb" id="3702-AT1G73165.1"/>
<dbReference type="EnsemblPlants" id="AT1G73165.1">
    <property type="protein sequence ID" value="AT1G73165.1"/>
    <property type="gene ID" value="AT1G73165"/>
</dbReference>
<dbReference type="GeneID" id="28717420"/>
<dbReference type="Gramene" id="AT1G73165.1">
    <property type="protein sequence ID" value="AT1G73165.1"/>
    <property type="gene ID" value="AT1G73165"/>
</dbReference>
<dbReference type="KEGG" id="ath:AT1G73165"/>
<dbReference type="Araport" id="AT1G73165"/>
<dbReference type="TAIR" id="AT1G73165">
    <property type="gene designation" value="CLE1"/>
</dbReference>
<dbReference type="eggNOG" id="ENOG502SFI1">
    <property type="taxonomic scope" value="Eukaryota"/>
</dbReference>
<dbReference type="HOGENOM" id="CLU_194792_1_0_1"/>
<dbReference type="InParanoid" id="Q3ECD6"/>
<dbReference type="OMA" id="IRRGRMM"/>
<dbReference type="OrthoDB" id="1413556at2759"/>
<dbReference type="PhylomeDB" id="Q3ECD6"/>
<dbReference type="PRO" id="PR:Q3ECD6"/>
<dbReference type="Proteomes" id="UP000006548">
    <property type="component" value="Chromosome 1"/>
</dbReference>
<dbReference type="ExpressionAtlas" id="Q3ECD6">
    <property type="expression patterns" value="baseline and differential"/>
</dbReference>
<dbReference type="GO" id="GO:0048046">
    <property type="term" value="C:apoplast"/>
    <property type="evidence" value="ECO:0000250"/>
    <property type="project" value="UniProtKB"/>
</dbReference>
<dbReference type="GO" id="GO:0033612">
    <property type="term" value="F:receptor serine/threonine kinase binding"/>
    <property type="evidence" value="ECO:0000353"/>
    <property type="project" value="UniProtKB"/>
</dbReference>
<dbReference type="GO" id="GO:0045168">
    <property type="term" value="P:cell-cell signaling involved in cell fate commitment"/>
    <property type="evidence" value="ECO:0000250"/>
    <property type="project" value="UniProtKB"/>
</dbReference>
<dbReference type="InterPro" id="IPR039616">
    <property type="entry name" value="CLE1-4"/>
</dbReference>
<dbReference type="PANTHER" id="PTHR33869">
    <property type="entry name" value="CLAVATA3/ESR (CLE)-RELATED PROTEIN 3"/>
    <property type="match status" value="1"/>
</dbReference>
<dbReference type="PANTHER" id="PTHR33869:SF18">
    <property type="entry name" value="CLAVATA3_ESR (CLE)-RELATED PROTEIN 1"/>
    <property type="match status" value="1"/>
</dbReference>
<name>CLE1_ARATH</name>
<proteinExistence type="evidence at protein level"/>